<protein>
    <recommendedName>
        <fullName evidence="1">Acyl carrier protein phosphodiesterase</fullName>
        <shortName evidence="1">ACP phosphodiesterase</shortName>
        <ecNumber evidence="1">3.1.4.14</ecNumber>
    </recommendedName>
</protein>
<evidence type="ECO:0000255" key="1">
    <source>
        <dbReference type="HAMAP-Rule" id="MF_01950"/>
    </source>
</evidence>
<accession>B7L637</accession>
<proteinExistence type="inferred from homology"/>
<reference key="1">
    <citation type="journal article" date="2009" name="PLoS Genet.">
        <title>Organised genome dynamics in the Escherichia coli species results in highly diverse adaptive paths.</title>
        <authorList>
            <person name="Touchon M."/>
            <person name="Hoede C."/>
            <person name="Tenaillon O."/>
            <person name="Barbe V."/>
            <person name="Baeriswyl S."/>
            <person name="Bidet P."/>
            <person name="Bingen E."/>
            <person name="Bonacorsi S."/>
            <person name="Bouchier C."/>
            <person name="Bouvet O."/>
            <person name="Calteau A."/>
            <person name="Chiapello H."/>
            <person name="Clermont O."/>
            <person name="Cruveiller S."/>
            <person name="Danchin A."/>
            <person name="Diard M."/>
            <person name="Dossat C."/>
            <person name="Karoui M.E."/>
            <person name="Frapy E."/>
            <person name="Garry L."/>
            <person name="Ghigo J.M."/>
            <person name="Gilles A.M."/>
            <person name="Johnson J."/>
            <person name="Le Bouguenec C."/>
            <person name="Lescat M."/>
            <person name="Mangenot S."/>
            <person name="Martinez-Jehanne V."/>
            <person name="Matic I."/>
            <person name="Nassif X."/>
            <person name="Oztas S."/>
            <person name="Petit M.A."/>
            <person name="Pichon C."/>
            <person name="Rouy Z."/>
            <person name="Ruf C.S."/>
            <person name="Schneider D."/>
            <person name="Tourret J."/>
            <person name="Vacherie B."/>
            <person name="Vallenet D."/>
            <person name="Medigue C."/>
            <person name="Rocha E.P.C."/>
            <person name="Denamur E."/>
        </authorList>
    </citation>
    <scope>NUCLEOTIDE SEQUENCE [LARGE SCALE GENOMIC DNA]</scope>
    <source>
        <strain>55989 / EAEC</strain>
    </source>
</reference>
<name>ACPH_ECO55</name>
<dbReference type="EC" id="3.1.4.14" evidence="1"/>
<dbReference type="EMBL" id="CU928145">
    <property type="protein sequence ID" value="CAU96287.1"/>
    <property type="molecule type" value="Genomic_DNA"/>
</dbReference>
<dbReference type="RefSeq" id="WP_001009884.1">
    <property type="nucleotide sequence ID" value="NC_011748.1"/>
</dbReference>
<dbReference type="SMR" id="B7L637"/>
<dbReference type="GeneID" id="93777056"/>
<dbReference type="KEGG" id="eck:EC55989_0413"/>
<dbReference type="HOGENOM" id="CLU_099370_1_0_6"/>
<dbReference type="Proteomes" id="UP000000746">
    <property type="component" value="Chromosome"/>
</dbReference>
<dbReference type="GO" id="GO:0008770">
    <property type="term" value="F:[acyl-carrier-protein] phosphodiesterase activity"/>
    <property type="evidence" value="ECO:0007669"/>
    <property type="project" value="UniProtKB-UniRule"/>
</dbReference>
<dbReference type="GO" id="GO:0006633">
    <property type="term" value="P:fatty acid biosynthetic process"/>
    <property type="evidence" value="ECO:0007669"/>
    <property type="project" value="UniProtKB-UniRule"/>
</dbReference>
<dbReference type="HAMAP" id="MF_01950">
    <property type="entry name" value="AcpH"/>
    <property type="match status" value="1"/>
</dbReference>
<dbReference type="InterPro" id="IPR007431">
    <property type="entry name" value="ACP_PD"/>
</dbReference>
<dbReference type="InterPro" id="IPR023491">
    <property type="entry name" value="ACP_phosphodiesterase_gpbac"/>
</dbReference>
<dbReference type="NCBIfam" id="NF007466">
    <property type="entry name" value="PRK10045.1"/>
    <property type="match status" value="1"/>
</dbReference>
<dbReference type="PANTHER" id="PTHR38764">
    <property type="entry name" value="ACYL CARRIER PROTEIN PHOSPHODIESTERASE"/>
    <property type="match status" value="1"/>
</dbReference>
<dbReference type="PANTHER" id="PTHR38764:SF1">
    <property type="entry name" value="ACYL CARRIER PROTEIN PHOSPHODIESTERASE"/>
    <property type="match status" value="1"/>
</dbReference>
<dbReference type="Pfam" id="PF04336">
    <property type="entry name" value="ACP_PD"/>
    <property type="match status" value="1"/>
</dbReference>
<dbReference type="PIRSF" id="PIRSF011489">
    <property type="entry name" value="DUF479"/>
    <property type="match status" value="1"/>
</dbReference>
<gene>
    <name evidence="1" type="primary">acpH</name>
    <name type="ordered locus">EC55989_0413</name>
</gene>
<comment type="function">
    <text evidence="1">Converts holo-ACP to apo-ACP by hydrolytic cleavage of the phosphopantetheine prosthetic group from ACP.</text>
</comment>
<comment type="catalytic activity">
    <reaction evidence="1">
        <text>holo-[ACP] + H2O = apo-[ACP] + (R)-4'-phosphopantetheine + H(+)</text>
        <dbReference type="Rhea" id="RHEA:20537"/>
        <dbReference type="Rhea" id="RHEA-COMP:9685"/>
        <dbReference type="Rhea" id="RHEA-COMP:9690"/>
        <dbReference type="ChEBI" id="CHEBI:15377"/>
        <dbReference type="ChEBI" id="CHEBI:15378"/>
        <dbReference type="ChEBI" id="CHEBI:29999"/>
        <dbReference type="ChEBI" id="CHEBI:61723"/>
        <dbReference type="ChEBI" id="CHEBI:64479"/>
        <dbReference type="EC" id="3.1.4.14"/>
    </reaction>
</comment>
<comment type="similarity">
    <text evidence="1">Belongs to the AcpH family.</text>
</comment>
<feature type="chain" id="PRO_1000188799" description="Acyl carrier protein phosphodiesterase">
    <location>
        <begin position="1"/>
        <end position="193"/>
    </location>
</feature>
<organism>
    <name type="scientific">Escherichia coli (strain 55989 / EAEC)</name>
    <dbReference type="NCBI Taxonomy" id="585055"/>
    <lineage>
        <taxon>Bacteria</taxon>
        <taxon>Pseudomonadati</taxon>
        <taxon>Pseudomonadota</taxon>
        <taxon>Gammaproteobacteria</taxon>
        <taxon>Enterobacterales</taxon>
        <taxon>Enterobacteriaceae</taxon>
        <taxon>Escherichia</taxon>
    </lineage>
</organism>
<keyword id="KW-0275">Fatty acid biosynthesis</keyword>
<keyword id="KW-0276">Fatty acid metabolism</keyword>
<keyword id="KW-0378">Hydrolase</keyword>
<keyword id="KW-0444">Lipid biosynthesis</keyword>
<keyword id="KW-0443">Lipid metabolism</keyword>
<keyword id="KW-1185">Reference proteome</keyword>
<sequence length="193" mass="22942">MNFLAHLHLAHLAESSLSGNLLADFVRGNPEESFPPDVVAGIHMHRRIDVLTDNLPEVREAREWFRSETRRVAPITLDVMWDHFLSRHWSQLSPDFPLQEFVCYAREQVMTILPDSPPRFINLNNYLWSEQWLVRYRDMDFIQNVLNGMASRRPRLDALRDSWYDLDAHYDALETRFWQFYPRMMAQASHKAL</sequence>